<dbReference type="EMBL" id="AY653733">
    <property type="protein sequence ID" value="AAV50730.1"/>
    <property type="molecule type" value="Genomic_DNA"/>
</dbReference>
<dbReference type="SMR" id="Q5UQD7"/>
<dbReference type="KEGG" id="vg:9925089"/>
<dbReference type="OrthoDB" id="28175at10239"/>
<dbReference type="Proteomes" id="UP000001134">
    <property type="component" value="Genome"/>
</dbReference>
<dbReference type="GO" id="GO:0006417">
    <property type="term" value="P:regulation of translation"/>
    <property type="evidence" value="ECO:0007669"/>
    <property type="project" value="UniProtKB-KW"/>
</dbReference>
<dbReference type="Gene3D" id="3.30.780.10">
    <property type="entry name" value="SUI1-like domain"/>
    <property type="match status" value="1"/>
</dbReference>
<dbReference type="InterPro" id="IPR001950">
    <property type="entry name" value="SUI1"/>
</dbReference>
<dbReference type="InterPro" id="IPR036877">
    <property type="entry name" value="SUI1_dom_sf"/>
</dbReference>
<dbReference type="InterPro" id="IPR005874">
    <property type="entry name" value="SUI1_euk"/>
</dbReference>
<dbReference type="PANTHER" id="PTHR10388">
    <property type="entry name" value="EUKARYOTIC TRANSLATION INITIATION FACTOR SUI1"/>
    <property type="match status" value="1"/>
</dbReference>
<dbReference type="Pfam" id="PF01253">
    <property type="entry name" value="SUI1"/>
    <property type="match status" value="1"/>
</dbReference>
<dbReference type="PIRSF" id="PIRSF004499">
    <property type="entry name" value="SUI1_euk"/>
    <property type="match status" value="1"/>
</dbReference>
<dbReference type="SUPFAM" id="SSF55159">
    <property type="entry name" value="eIF1-like"/>
    <property type="match status" value="1"/>
</dbReference>
<dbReference type="PROSITE" id="PS50296">
    <property type="entry name" value="SUI1"/>
    <property type="match status" value="1"/>
</dbReference>
<gene>
    <name type="ordered locus">MIMI_R464</name>
</gene>
<reference key="1">
    <citation type="journal article" date="2004" name="Science">
        <title>The 1.2-megabase genome sequence of Mimivirus.</title>
        <authorList>
            <person name="Raoult D."/>
            <person name="Audic S."/>
            <person name="Robert C."/>
            <person name="Abergel C."/>
            <person name="Renesto P."/>
            <person name="Ogata H."/>
            <person name="La Scola B."/>
            <person name="Susan M."/>
            <person name="Claverie J.-M."/>
        </authorList>
    </citation>
    <scope>NUCLEOTIDE SEQUENCE [LARGE SCALE GENOMIC DNA]</scope>
    <source>
        <strain>Rowbotham-Bradford</strain>
    </source>
</reference>
<accession>Q5UQD7</accession>
<feature type="chain" id="PRO_0000244024" description="Protein translation factor SUI1 homolog">
    <location>
        <begin position="1"/>
        <end position="106"/>
    </location>
</feature>
<proteinExistence type="inferred from homology"/>
<protein>
    <recommendedName>
        <fullName>Protein translation factor SUI1 homolog</fullName>
    </recommendedName>
</protein>
<keyword id="KW-0396">Initiation factor</keyword>
<keyword id="KW-0648">Protein biosynthesis</keyword>
<keyword id="KW-1185">Reference proteome</keyword>
<keyword id="KW-0810">Translation regulation</keyword>
<organism>
    <name type="scientific">Acanthamoeba polyphaga mimivirus</name>
    <name type="common">APMV</name>
    <dbReference type="NCBI Taxonomy" id="212035"/>
    <lineage>
        <taxon>Viruses</taxon>
        <taxon>Varidnaviria</taxon>
        <taxon>Bamfordvirae</taxon>
        <taxon>Nucleocytoviricota</taxon>
        <taxon>Megaviricetes</taxon>
        <taxon>Imitervirales</taxon>
        <taxon>Mimiviridae</taxon>
        <taxon>Megamimivirinae</taxon>
        <taxon>Mimivirus</taxon>
        <taxon>Mimivirus bradfordmassiliense</taxon>
    </lineage>
</organism>
<comment type="function">
    <text evidence="1">Additional factor that functions in concert with eIF-2 and the initiator tRNA in directing the ribosome to the proper start site of translation.</text>
</comment>
<comment type="similarity">
    <text evidence="2">Belongs to the SUI1 family.</text>
</comment>
<name>SUI1_MIMIV</name>
<evidence type="ECO:0000250" key="1"/>
<evidence type="ECO:0000305" key="2"/>
<organismHost>
    <name type="scientific">Acanthamoeba polyphaga</name>
    <name type="common">Amoeba</name>
    <dbReference type="NCBI Taxonomy" id="5757"/>
</organismHost>
<sequence>MLNRIIYDPFNDGLDTEQHFEKIHIKTKQRTKTKSITIIENIPEKIDLKLFLKKLKYTFHCSGSIQQNYDDDSKFIQLSGDHRELVKNFLIKNSIVKESNIVMHGY</sequence>